<name>SYFB_CHLAB</name>
<evidence type="ECO:0000255" key="1">
    <source>
        <dbReference type="HAMAP-Rule" id="MF_00283"/>
    </source>
</evidence>
<proteinExistence type="inferred from homology"/>
<comment type="catalytic activity">
    <reaction evidence="1">
        <text>tRNA(Phe) + L-phenylalanine + ATP = L-phenylalanyl-tRNA(Phe) + AMP + diphosphate + H(+)</text>
        <dbReference type="Rhea" id="RHEA:19413"/>
        <dbReference type="Rhea" id="RHEA-COMP:9668"/>
        <dbReference type="Rhea" id="RHEA-COMP:9699"/>
        <dbReference type="ChEBI" id="CHEBI:15378"/>
        <dbReference type="ChEBI" id="CHEBI:30616"/>
        <dbReference type="ChEBI" id="CHEBI:33019"/>
        <dbReference type="ChEBI" id="CHEBI:58095"/>
        <dbReference type="ChEBI" id="CHEBI:78442"/>
        <dbReference type="ChEBI" id="CHEBI:78531"/>
        <dbReference type="ChEBI" id="CHEBI:456215"/>
        <dbReference type="EC" id="6.1.1.20"/>
    </reaction>
</comment>
<comment type="cofactor">
    <cofactor evidence="1">
        <name>Mg(2+)</name>
        <dbReference type="ChEBI" id="CHEBI:18420"/>
    </cofactor>
    <text evidence="1">Binds 2 magnesium ions per tetramer.</text>
</comment>
<comment type="subunit">
    <text evidence="1">Tetramer of two alpha and two beta subunits.</text>
</comment>
<comment type="subcellular location">
    <subcellularLocation>
        <location evidence="1">Cytoplasm</location>
    </subcellularLocation>
</comment>
<comment type="similarity">
    <text evidence="1">Belongs to the phenylalanyl-tRNA synthetase beta subunit family. Type 1 subfamily.</text>
</comment>
<feature type="chain" id="PRO_0000232053" description="Phenylalanine--tRNA ligase beta subunit">
    <location>
        <begin position="1"/>
        <end position="794"/>
    </location>
</feature>
<feature type="domain" description="tRNA-binding" evidence="1">
    <location>
        <begin position="39"/>
        <end position="154"/>
    </location>
</feature>
<feature type="domain" description="B5" evidence="1">
    <location>
        <begin position="403"/>
        <end position="481"/>
    </location>
</feature>
<feature type="domain" description="FDX-ACB" evidence="1">
    <location>
        <begin position="697"/>
        <end position="793"/>
    </location>
</feature>
<feature type="binding site" evidence="1">
    <location>
        <position position="457"/>
    </location>
    <ligand>
        <name>Mg(2+)</name>
        <dbReference type="ChEBI" id="CHEBI:18420"/>
        <note>shared with alpha subunit</note>
    </ligand>
</feature>
<feature type="binding site" evidence="1">
    <location>
        <position position="463"/>
    </location>
    <ligand>
        <name>Mg(2+)</name>
        <dbReference type="ChEBI" id="CHEBI:18420"/>
        <note>shared with alpha subunit</note>
    </ligand>
</feature>
<feature type="binding site" evidence="1">
    <location>
        <position position="466"/>
    </location>
    <ligand>
        <name>Mg(2+)</name>
        <dbReference type="ChEBI" id="CHEBI:18420"/>
        <note>shared with alpha subunit</note>
    </ligand>
</feature>
<feature type="binding site" evidence="1">
    <location>
        <position position="467"/>
    </location>
    <ligand>
        <name>Mg(2+)</name>
        <dbReference type="ChEBI" id="CHEBI:18420"/>
        <note>shared with alpha subunit</note>
    </ligand>
</feature>
<gene>
    <name evidence="1" type="primary">pheT</name>
    <name type="ordered locus">CAB145</name>
</gene>
<dbReference type="EC" id="6.1.1.20" evidence="1"/>
<dbReference type="EMBL" id="CR848038">
    <property type="protein sequence ID" value="CAH63603.1"/>
    <property type="molecule type" value="Genomic_DNA"/>
</dbReference>
<dbReference type="RefSeq" id="WP_011096859.1">
    <property type="nucleotide sequence ID" value="NC_004552.2"/>
</dbReference>
<dbReference type="SMR" id="Q5L6W7"/>
<dbReference type="KEGG" id="cab:CAB145"/>
<dbReference type="eggNOG" id="COG0072">
    <property type="taxonomic scope" value="Bacteria"/>
</dbReference>
<dbReference type="eggNOG" id="COG0073">
    <property type="taxonomic scope" value="Bacteria"/>
</dbReference>
<dbReference type="HOGENOM" id="CLU_016891_0_0_0"/>
<dbReference type="OrthoDB" id="9805455at2"/>
<dbReference type="Proteomes" id="UP000001012">
    <property type="component" value="Chromosome"/>
</dbReference>
<dbReference type="GO" id="GO:0009328">
    <property type="term" value="C:phenylalanine-tRNA ligase complex"/>
    <property type="evidence" value="ECO:0007669"/>
    <property type="project" value="TreeGrafter"/>
</dbReference>
<dbReference type="GO" id="GO:0005524">
    <property type="term" value="F:ATP binding"/>
    <property type="evidence" value="ECO:0007669"/>
    <property type="project" value="UniProtKB-UniRule"/>
</dbReference>
<dbReference type="GO" id="GO:0000287">
    <property type="term" value="F:magnesium ion binding"/>
    <property type="evidence" value="ECO:0007669"/>
    <property type="project" value="UniProtKB-UniRule"/>
</dbReference>
<dbReference type="GO" id="GO:0004826">
    <property type="term" value="F:phenylalanine-tRNA ligase activity"/>
    <property type="evidence" value="ECO:0007669"/>
    <property type="project" value="UniProtKB-UniRule"/>
</dbReference>
<dbReference type="GO" id="GO:0000049">
    <property type="term" value="F:tRNA binding"/>
    <property type="evidence" value="ECO:0007669"/>
    <property type="project" value="UniProtKB-KW"/>
</dbReference>
<dbReference type="GO" id="GO:0006432">
    <property type="term" value="P:phenylalanyl-tRNA aminoacylation"/>
    <property type="evidence" value="ECO:0007669"/>
    <property type="project" value="UniProtKB-UniRule"/>
</dbReference>
<dbReference type="CDD" id="cd00769">
    <property type="entry name" value="PheRS_beta_core"/>
    <property type="match status" value="1"/>
</dbReference>
<dbReference type="CDD" id="cd02796">
    <property type="entry name" value="tRNA_bind_bactPheRS"/>
    <property type="match status" value="1"/>
</dbReference>
<dbReference type="Gene3D" id="3.30.56.10">
    <property type="match status" value="2"/>
</dbReference>
<dbReference type="Gene3D" id="3.30.930.10">
    <property type="entry name" value="Bira Bifunctional Protein, Domain 2"/>
    <property type="match status" value="1"/>
</dbReference>
<dbReference type="Gene3D" id="3.30.70.380">
    <property type="entry name" value="Ferrodoxin-fold anticodon-binding domain"/>
    <property type="match status" value="1"/>
</dbReference>
<dbReference type="Gene3D" id="2.40.50.140">
    <property type="entry name" value="Nucleic acid-binding proteins"/>
    <property type="match status" value="1"/>
</dbReference>
<dbReference type="Gene3D" id="3.50.40.10">
    <property type="entry name" value="Phenylalanyl-trna Synthetase, Chain B, domain 3"/>
    <property type="match status" value="1"/>
</dbReference>
<dbReference type="HAMAP" id="MF_00283">
    <property type="entry name" value="Phe_tRNA_synth_beta1"/>
    <property type="match status" value="1"/>
</dbReference>
<dbReference type="InterPro" id="IPR045864">
    <property type="entry name" value="aa-tRNA-synth_II/BPL/LPL"/>
</dbReference>
<dbReference type="InterPro" id="IPR005146">
    <property type="entry name" value="B3/B4_tRNA-bd"/>
</dbReference>
<dbReference type="InterPro" id="IPR009061">
    <property type="entry name" value="DNA-bd_dom_put_sf"/>
</dbReference>
<dbReference type="InterPro" id="IPR005121">
    <property type="entry name" value="Fdx_antiC-bd"/>
</dbReference>
<dbReference type="InterPro" id="IPR036690">
    <property type="entry name" value="Fdx_antiC-bd_sf"/>
</dbReference>
<dbReference type="InterPro" id="IPR012340">
    <property type="entry name" value="NA-bd_OB-fold"/>
</dbReference>
<dbReference type="InterPro" id="IPR045060">
    <property type="entry name" value="Phe-tRNA-ligase_IIc_bsu"/>
</dbReference>
<dbReference type="InterPro" id="IPR004532">
    <property type="entry name" value="Phe-tRNA-ligase_IIc_bsu_bact"/>
</dbReference>
<dbReference type="InterPro" id="IPR020825">
    <property type="entry name" value="Phe-tRNA_synthase-like_B3/B4"/>
</dbReference>
<dbReference type="InterPro" id="IPR041616">
    <property type="entry name" value="PheRS_beta_core"/>
</dbReference>
<dbReference type="InterPro" id="IPR002547">
    <property type="entry name" value="tRNA-bd_dom"/>
</dbReference>
<dbReference type="InterPro" id="IPR033714">
    <property type="entry name" value="tRNA_bind_bactPheRS"/>
</dbReference>
<dbReference type="InterPro" id="IPR005147">
    <property type="entry name" value="tRNA_synthase_B5-dom"/>
</dbReference>
<dbReference type="NCBIfam" id="TIGR00472">
    <property type="entry name" value="pheT_bact"/>
    <property type="match status" value="1"/>
</dbReference>
<dbReference type="PANTHER" id="PTHR10947:SF0">
    <property type="entry name" value="PHENYLALANINE--TRNA LIGASE BETA SUBUNIT"/>
    <property type="match status" value="1"/>
</dbReference>
<dbReference type="PANTHER" id="PTHR10947">
    <property type="entry name" value="PHENYLALANYL-TRNA SYNTHETASE BETA CHAIN AND LEUCINE-RICH REPEAT-CONTAINING PROTEIN 47"/>
    <property type="match status" value="1"/>
</dbReference>
<dbReference type="Pfam" id="PF03483">
    <property type="entry name" value="B3_4"/>
    <property type="match status" value="1"/>
</dbReference>
<dbReference type="Pfam" id="PF03484">
    <property type="entry name" value="B5"/>
    <property type="match status" value="1"/>
</dbReference>
<dbReference type="Pfam" id="PF03147">
    <property type="entry name" value="FDX-ACB"/>
    <property type="match status" value="1"/>
</dbReference>
<dbReference type="Pfam" id="PF01588">
    <property type="entry name" value="tRNA_bind"/>
    <property type="match status" value="1"/>
</dbReference>
<dbReference type="Pfam" id="PF17759">
    <property type="entry name" value="tRNA_synthFbeta"/>
    <property type="match status" value="1"/>
</dbReference>
<dbReference type="SMART" id="SM00873">
    <property type="entry name" value="B3_4"/>
    <property type="match status" value="1"/>
</dbReference>
<dbReference type="SMART" id="SM00874">
    <property type="entry name" value="B5"/>
    <property type="match status" value="1"/>
</dbReference>
<dbReference type="SMART" id="SM00896">
    <property type="entry name" value="FDX-ACB"/>
    <property type="match status" value="1"/>
</dbReference>
<dbReference type="SUPFAM" id="SSF54991">
    <property type="entry name" value="Anticodon-binding domain of PheRS"/>
    <property type="match status" value="1"/>
</dbReference>
<dbReference type="SUPFAM" id="SSF55681">
    <property type="entry name" value="Class II aaRS and biotin synthetases"/>
    <property type="match status" value="1"/>
</dbReference>
<dbReference type="SUPFAM" id="SSF50249">
    <property type="entry name" value="Nucleic acid-binding proteins"/>
    <property type="match status" value="1"/>
</dbReference>
<dbReference type="SUPFAM" id="SSF56037">
    <property type="entry name" value="PheT/TilS domain"/>
    <property type="match status" value="1"/>
</dbReference>
<dbReference type="SUPFAM" id="SSF46955">
    <property type="entry name" value="Putative DNA-binding domain"/>
    <property type="match status" value="1"/>
</dbReference>
<dbReference type="PROSITE" id="PS51483">
    <property type="entry name" value="B5"/>
    <property type="match status" value="1"/>
</dbReference>
<dbReference type="PROSITE" id="PS51447">
    <property type="entry name" value="FDX_ACB"/>
    <property type="match status" value="1"/>
</dbReference>
<dbReference type="PROSITE" id="PS50886">
    <property type="entry name" value="TRBD"/>
    <property type="match status" value="1"/>
</dbReference>
<accession>Q5L6W7</accession>
<protein>
    <recommendedName>
        <fullName evidence="1">Phenylalanine--tRNA ligase beta subunit</fullName>
        <ecNumber evidence="1">6.1.1.20</ecNumber>
    </recommendedName>
    <alternativeName>
        <fullName evidence="1">Phenylalanyl-tRNA synthetase beta subunit</fullName>
        <shortName evidence="1">PheRS</shortName>
    </alternativeName>
</protein>
<organism>
    <name type="scientific">Chlamydia abortus (strain DSM 27085 / S26/3)</name>
    <name type="common">Chlamydophila abortus</name>
    <dbReference type="NCBI Taxonomy" id="218497"/>
    <lineage>
        <taxon>Bacteria</taxon>
        <taxon>Pseudomonadati</taxon>
        <taxon>Chlamydiota</taxon>
        <taxon>Chlamydiia</taxon>
        <taxon>Chlamydiales</taxon>
        <taxon>Chlamydiaceae</taxon>
        <taxon>Chlamydia/Chlamydophila group</taxon>
        <taxon>Chlamydia</taxon>
    </lineage>
</organism>
<reference key="1">
    <citation type="journal article" date="2005" name="Genome Res.">
        <title>The Chlamydophila abortus genome sequence reveals an array of variable proteins that contribute to interspecies variation.</title>
        <authorList>
            <person name="Thomson N.R."/>
            <person name="Yeats C."/>
            <person name="Bell K."/>
            <person name="Holden M.T.G."/>
            <person name="Bentley S.D."/>
            <person name="Livingstone M."/>
            <person name="Cerdeno-Tarraga A.-M."/>
            <person name="Harris B."/>
            <person name="Doggett J."/>
            <person name="Ormond D."/>
            <person name="Mungall K."/>
            <person name="Clarke K."/>
            <person name="Feltwell T."/>
            <person name="Hance Z."/>
            <person name="Sanders M."/>
            <person name="Quail M.A."/>
            <person name="Price C."/>
            <person name="Barrell B.G."/>
            <person name="Parkhill J."/>
            <person name="Longbottom D."/>
        </authorList>
    </citation>
    <scope>NUCLEOTIDE SEQUENCE [LARGE SCALE GENOMIC DNA]</scope>
    <source>
        <strain>DSM 27085 / S26/3</strain>
    </source>
</reference>
<keyword id="KW-0030">Aminoacyl-tRNA synthetase</keyword>
<keyword id="KW-0067">ATP-binding</keyword>
<keyword id="KW-0963">Cytoplasm</keyword>
<keyword id="KW-0436">Ligase</keyword>
<keyword id="KW-0460">Magnesium</keyword>
<keyword id="KW-0479">Metal-binding</keyword>
<keyword id="KW-0547">Nucleotide-binding</keyword>
<keyword id="KW-0648">Protein biosynthesis</keyword>
<keyword id="KW-0694">RNA-binding</keyword>
<keyword id="KW-0820">tRNA-binding</keyword>
<sequence length="794" mass="88941">MRVSLSSLQRFFSSPLSIKQIIEACDHIGIETEIETLLSSSFSSIITAKIIQTLPHPNADKLVVATLFDGKQEHQVVCGAPNCRPDIIVPLALPGAKLHDHEGNPYTIKKSKLRGIESQGMCCGADELGFSHLQKTERGLFEFPANTPLGESACALLADTWIEFSLTPNLGHCASLLGLAREIAHVTHVDLILPQEFSFSPLEIITKDSPSHDTSICPFFCCVKISGVCAETSPQELQQALSQFKQKSINTIVDITNYIMLAMGQPLHVYDAKTVDIDSLHAEKAQEQHGLKLLNNEEVLIPQGTAIICDKNHTVGLAGVMGSGDSSFNETTTDIILEAAYFLPKAIRASQMRIPLHSEAAYRFTRGTDPDHVLPSLYAAIHYIQKLFPKAKVAPIHVLGSIPPSPTLTLRTEMVERVLGVPLSHSQVHEELASLGFTVTPQDQGSLSVQVPAYRHDIREEIDLVEEMCRTQPWKIEKKKAPATYSPLYAFKREIVDFLAQSGLQQFFTCDLLDMETAALHRQETDYIALQGSKHATVLRDSLLPGLLKSTATNLNRQAPYVHAFELGTIYTKKNAQYQETQSLGIILSGEAEELSWVFHERVLSFYSIKGWLERLFRHFYISSKTYTIRPSEHPSFHPYQQADLYLHKHLLGRFGTLHPQLCKKAHIKHPVFFAELSVDSLLHTQKKAIARYQPYPIYPSSFRDITLTVDESVPADALRKKLLSFPSKWLENVSIISIYQNKNPTAQNKNVSLRLVFQNKERTLSNQEIEEEHERLLAMLNEQLDDTKGTIDS</sequence>